<accession>O32867</accession>
<comment type="function">
    <text>Part of a complex that catalyzes the formation of methyl-coenzyme M and tetrahydromethanopterin from coenzyme M and methyl-tetrahydromethanopterin. This is an energy-conserving, sodium-ion translocating step.</text>
</comment>
<comment type="catalytic activity">
    <reaction evidence="2">
        <text>5-methyl-5,6,7,8-tetrahydromethanopterin + coenzyme M + 2 Na(+)(in) = 5,6,7,8-tetrahydromethanopterin + methyl-coenzyme M + 2 Na(+)(out)</text>
        <dbReference type="Rhea" id="RHEA:53492"/>
        <dbReference type="ChEBI" id="CHEBI:29101"/>
        <dbReference type="ChEBI" id="CHEBI:58103"/>
        <dbReference type="ChEBI" id="CHEBI:58116"/>
        <dbReference type="ChEBI" id="CHEBI:58286"/>
        <dbReference type="ChEBI" id="CHEBI:58319"/>
        <dbReference type="EC" id="7.2.1.4"/>
    </reaction>
</comment>
<comment type="cofactor">
    <cofactor evidence="2">
        <name>5-hydroxybenzimidazolylcob(I)amide</name>
        <dbReference type="ChEBI" id="CHEBI:60494"/>
    </cofactor>
    <text evidence="2">Binds 1 5-hydroxybenzimidazolylcobamide group.</text>
</comment>
<comment type="pathway">
    <text evidence="2">One-carbon metabolism; methanogenesis from CO(2); methyl-coenzyme M from 5,10-methylene-5,6,7,8-tetrahydromethanopterin: step 2/2.</text>
</comment>
<comment type="subunit">
    <text evidence="2">The complex is composed of 8 subunits; MtrA, MtrB, MtrC, MtrD, MtrE, MtrF, MtrG and MtrH.</text>
</comment>
<comment type="subcellular location">
    <subcellularLocation>
        <location evidence="2">Cell membrane</location>
        <topology evidence="2">Single-pass membrane protein</topology>
    </subcellularLocation>
</comment>
<comment type="similarity">
    <text evidence="2">Belongs to the MtrA family.</text>
</comment>
<comment type="sequence caution" evidence="3">
    <conflict type="erroneous initiation">
        <sequence resource="EMBL-CDS" id="AAM01875"/>
    </conflict>
    <text>Extended N-terminus.</text>
</comment>
<keyword id="KW-1003">Cell membrane</keyword>
<keyword id="KW-0170">Cobalt</keyword>
<keyword id="KW-0472">Membrane</keyword>
<keyword id="KW-0484">Methanogenesis</keyword>
<keyword id="KW-0489">Methyltransferase</keyword>
<keyword id="KW-0554">One-carbon metabolism</keyword>
<keyword id="KW-1185">Reference proteome</keyword>
<keyword id="KW-0808">Transferase</keyword>
<keyword id="KW-1278">Translocase</keyword>
<keyword id="KW-0812">Transmembrane</keyword>
<keyword id="KW-1133">Transmembrane helix</keyword>
<proteinExistence type="inferred from homology"/>
<name>MTRA_METKA</name>
<feature type="initiator methionine" description="Removed" evidence="1">
    <location>
        <position position="1"/>
    </location>
</feature>
<feature type="chain" id="PRO_0000147504" description="Tetrahydromethanopterin S-methyltransferase subunit A">
    <location>
        <begin position="2"/>
        <end position="249"/>
    </location>
</feature>
<feature type="topological domain" description="Cytoplasmic" evidence="2">
    <location>
        <begin position="2"/>
        <end position="225"/>
    </location>
</feature>
<feature type="transmembrane region" description="Helical" evidence="2">
    <location>
        <begin position="226"/>
        <end position="246"/>
    </location>
</feature>
<feature type="topological domain" description="Extracellular" evidence="2">
    <location>
        <begin position="247"/>
        <end position="249"/>
    </location>
</feature>
<feature type="binding site" evidence="2">
    <location>
        <position position="88"/>
    </location>
    <ligand>
        <name>5-hydroxybenzimidazolylcob(I)amide</name>
        <dbReference type="ChEBI" id="CHEBI:60494"/>
        <note>cofactor</note>
    </ligand>
</feature>
<gene>
    <name evidence="2" type="primary">mtrA</name>
    <name type="ordered locus">MK0660</name>
</gene>
<protein>
    <recommendedName>
        <fullName evidence="2">Tetrahydromethanopterin S-methyltransferase subunit A</fullName>
        <ecNumber evidence="2">7.2.1.4</ecNumber>
    </recommendedName>
    <alternativeName>
        <fullName evidence="2">N5-methyltetrahydromethanopterin--coenzyme M methyltransferase subunit A</fullName>
    </alternativeName>
</protein>
<evidence type="ECO:0000250" key="1"/>
<evidence type="ECO:0000255" key="2">
    <source>
        <dbReference type="HAMAP-Rule" id="MF_01093"/>
    </source>
</evidence>
<evidence type="ECO:0000305" key="3"/>
<sequence length="249" mass="26762">MPEKAEPAEGWPVVEGDYVVGDPEAPVHVVTLGSHIEEDILKAAGEDKVAIAGPCKTENIGIEKVIANVIANPNIRFGVLCGAEVTGHLTGQCFKAMYENGVDPDSGEIIGAEGAIPYLENIPEEAVERYRDQIVELVDLIDVEDVDEIVKAIEECVEKDPGAYEEGPMTISLEEEEEEELAEVAGMPVSAETVTVEYRINDVRVGVKSIGAMQRYMAGYLSGRTMGLLIGIISGMIFLFLPMVVLGGV</sequence>
<dbReference type="EC" id="7.2.1.4" evidence="2"/>
<dbReference type="EMBL" id="Y14428">
    <property type="protein sequence ID" value="CAA74771.1"/>
    <property type="molecule type" value="Genomic_DNA"/>
</dbReference>
<dbReference type="EMBL" id="AE009439">
    <property type="protein sequence ID" value="AAM01875.1"/>
    <property type="status" value="ALT_INIT"/>
    <property type="molecule type" value="Genomic_DNA"/>
</dbReference>
<dbReference type="RefSeq" id="WP_148679568.1">
    <property type="nucleotide sequence ID" value="NC_003551.1"/>
</dbReference>
<dbReference type="SMR" id="O32867"/>
<dbReference type="FunCoup" id="O32867">
    <property type="interactions" value="66"/>
</dbReference>
<dbReference type="STRING" id="190192.MK0660"/>
<dbReference type="PaxDb" id="190192-MK0660"/>
<dbReference type="EnsemblBacteria" id="AAM01875">
    <property type="protein sequence ID" value="AAM01875"/>
    <property type="gene ID" value="MK0660"/>
</dbReference>
<dbReference type="GeneID" id="1476761"/>
<dbReference type="KEGG" id="mka:MK0660"/>
<dbReference type="PATRIC" id="fig|190192.8.peg.699"/>
<dbReference type="HOGENOM" id="CLU_100863_0_0_2"/>
<dbReference type="InParanoid" id="O32867"/>
<dbReference type="OrthoDB" id="130682at2157"/>
<dbReference type="UniPathway" id="UPA00640">
    <property type="reaction ID" value="UER00698"/>
</dbReference>
<dbReference type="Proteomes" id="UP000001826">
    <property type="component" value="Chromosome"/>
</dbReference>
<dbReference type="GO" id="GO:0005886">
    <property type="term" value="C:plasma membrane"/>
    <property type="evidence" value="ECO:0007669"/>
    <property type="project" value="UniProtKB-SubCell"/>
</dbReference>
<dbReference type="GO" id="GO:0050897">
    <property type="term" value="F:cobalt ion binding"/>
    <property type="evidence" value="ECO:0007669"/>
    <property type="project" value="InterPro"/>
</dbReference>
<dbReference type="GO" id="GO:0030269">
    <property type="term" value="F:tetrahydromethanopterin S-methyltransferase activity"/>
    <property type="evidence" value="ECO:0007669"/>
    <property type="project" value="UniProtKB-UniRule"/>
</dbReference>
<dbReference type="GO" id="GO:0019386">
    <property type="term" value="P:methanogenesis, from carbon dioxide"/>
    <property type="evidence" value="ECO:0007669"/>
    <property type="project" value="UniProtKB-UniRule"/>
</dbReference>
<dbReference type="GO" id="GO:0032259">
    <property type="term" value="P:methylation"/>
    <property type="evidence" value="ECO:0007669"/>
    <property type="project" value="UniProtKB-KW"/>
</dbReference>
<dbReference type="GO" id="GO:0006730">
    <property type="term" value="P:one-carbon metabolic process"/>
    <property type="evidence" value="ECO:0007669"/>
    <property type="project" value="UniProtKB-UniRule"/>
</dbReference>
<dbReference type="HAMAP" id="MF_01093">
    <property type="entry name" value="MtrA"/>
    <property type="match status" value="1"/>
</dbReference>
<dbReference type="InterPro" id="IPR030688">
    <property type="entry name" value="MeTrfase_MtrA/MtxA"/>
</dbReference>
<dbReference type="InterPro" id="IPR005778">
    <property type="entry name" value="MtrA"/>
</dbReference>
<dbReference type="NCBIfam" id="TIGR01111">
    <property type="entry name" value="mtrA"/>
    <property type="match status" value="1"/>
</dbReference>
<dbReference type="NCBIfam" id="NF002126">
    <property type="entry name" value="PRK00964.1-4"/>
    <property type="match status" value="1"/>
</dbReference>
<dbReference type="Pfam" id="PF04208">
    <property type="entry name" value="MtrA"/>
    <property type="match status" value="1"/>
</dbReference>
<dbReference type="PIRSF" id="PIRSF500207">
    <property type="entry name" value="MtrA"/>
    <property type="match status" value="1"/>
</dbReference>
<dbReference type="PIRSF" id="PIRSF009452">
    <property type="entry name" value="MtrA_MtxA"/>
    <property type="match status" value="1"/>
</dbReference>
<organism>
    <name type="scientific">Methanopyrus kandleri (strain AV19 / DSM 6324 / JCM 9639 / NBRC 100938)</name>
    <dbReference type="NCBI Taxonomy" id="190192"/>
    <lineage>
        <taxon>Archaea</taxon>
        <taxon>Methanobacteriati</taxon>
        <taxon>Methanobacteriota</taxon>
        <taxon>Methanomada group</taxon>
        <taxon>Methanopyri</taxon>
        <taxon>Methanopyrales</taxon>
        <taxon>Methanopyraceae</taxon>
        <taxon>Methanopyrus</taxon>
    </lineage>
</organism>
<reference key="1">
    <citation type="journal article" date="1997" name="Eur. J. Biochem.">
        <title>Identification of the active site histidine in the corrinoid protein MtrA of the energy-conserving methyltransferase complex from Methanobacterium thermoautotrophicum.</title>
        <authorList>
            <person name="Harms U."/>
            <person name="Thauer R.K."/>
        </authorList>
    </citation>
    <scope>NUCLEOTIDE SEQUENCE [GENOMIC DNA]</scope>
</reference>
<reference key="2">
    <citation type="journal article" date="2002" name="Proc. Natl. Acad. Sci. U.S.A.">
        <title>The complete genome of hyperthermophile Methanopyrus kandleri AV19 and monophyly of archaeal methanogens.</title>
        <authorList>
            <person name="Slesarev A.I."/>
            <person name="Mezhevaya K.V."/>
            <person name="Makarova K.S."/>
            <person name="Polushin N.N."/>
            <person name="Shcherbinina O.V."/>
            <person name="Shakhova V.V."/>
            <person name="Belova G.I."/>
            <person name="Aravind L."/>
            <person name="Natale D.A."/>
            <person name="Rogozin I.B."/>
            <person name="Tatusov R.L."/>
            <person name="Wolf Y.I."/>
            <person name="Stetter K.O."/>
            <person name="Malykh A.G."/>
            <person name="Koonin E.V."/>
            <person name="Kozyavkin S.A."/>
        </authorList>
    </citation>
    <scope>NUCLEOTIDE SEQUENCE [LARGE SCALE GENOMIC DNA]</scope>
    <source>
        <strain>AV19 / DSM 6324 / JCM 9639 / NBRC 100938</strain>
    </source>
</reference>